<accession>Q2GI96</accession>
<evidence type="ECO:0000255" key="1">
    <source>
        <dbReference type="HAMAP-Rule" id="MF_00014"/>
    </source>
</evidence>
<protein>
    <recommendedName>
        <fullName evidence="1">Ribosome maturation factor RimM</fullName>
    </recommendedName>
</protein>
<comment type="function">
    <text evidence="1">An accessory protein needed during the final step in the assembly of 30S ribosomal subunit, possibly for assembly of the head region. Essential for efficient processing of 16S rRNA. May be needed both before and after RbfA during the maturation of 16S rRNA. It has affinity for free ribosomal 30S subunits but not for 70S ribosomes.</text>
</comment>
<comment type="subunit">
    <text evidence="1">Binds ribosomal protein uS19.</text>
</comment>
<comment type="subcellular location">
    <subcellularLocation>
        <location evidence="1">Cytoplasm</location>
    </subcellularLocation>
</comment>
<comment type="domain">
    <text evidence="1">The PRC barrel domain binds ribosomal protein uS19.</text>
</comment>
<comment type="similarity">
    <text evidence="1">Belongs to the RimM family.</text>
</comment>
<organism>
    <name type="scientific">Ehrlichia chaffeensis (strain ATCC CRL-10679 / Arkansas)</name>
    <dbReference type="NCBI Taxonomy" id="205920"/>
    <lineage>
        <taxon>Bacteria</taxon>
        <taxon>Pseudomonadati</taxon>
        <taxon>Pseudomonadota</taxon>
        <taxon>Alphaproteobacteria</taxon>
        <taxon>Rickettsiales</taxon>
        <taxon>Anaplasmataceae</taxon>
        <taxon>Ehrlichia</taxon>
    </lineage>
</organism>
<keyword id="KW-0143">Chaperone</keyword>
<keyword id="KW-0963">Cytoplasm</keyword>
<keyword id="KW-1185">Reference proteome</keyword>
<keyword id="KW-0690">Ribosome biogenesis</keyword>
<keyword id="KW-0698">rRNA processing</keyword>
<feature type="chain" id="PRO_0000244128" description="Ribosome maturation factor RimM">
    <location>
        <begin position="1"/>
        <end position="175"/>
    </location>
</feature>
<feature type="domain" description="PRC barrel" evidence="1">
    <location>
        <begin position="93"/>
        <end position="167"/>
    </location>
</feature>
<name>RIMM_EHRCR</name>
<proteinExistence type="inferred from homology"/>
<sequence>MENDLICLGVITSSHGISGHVKIKTFTENPEDFTSYGTLTDGINTYEVEIISIISQNIIIAQIKGIVSRTDADLLRNKKFFVEKNKLPNPTNDDEFYYSDLIGLNVVLENNNVYGNIKKIHNFGSCDIIEIRLSNSKKSTMLPFTKDIFPYVNVKEKYIIITLPEVIGNNSDIQR</sequence>
<gene>
    <name evidence="1" type="primary">rimM</name>
    <name type="ordered locus">ECH_0002</name>
</gene>
<dbReference type="EMBL" id="CP000236">
    <property type="protein sequence ID" value="ABD45431.1"/>
    <property type="molecule type" value="Genomic_DNA"/>
</dbReference>
<dbReference type="RefSeq" id="WP_006010628.1">
    <property type="nucleotide sequence ID" value="NC_007799.1"/>
</dbReference>
<dbReference type="SMR" id="Q2GI96"/>
<dbReference type="STRING" id="205920.ECH_0002"/>
<dbReference type="KEGG" id="ech:ECH_0002"/>
<dbReference type="eggNOG" id="COG0806">
    <property type="taxonomic scope" value="Bacteria"/>
</dbReference>
<dbReference type="HOGENOM" id="CLU_077636_1_0_5"/>
<dbReference type="OrthoDB" id="9788191at2"/>
<dbReference type="Proteomes" id="UP000008320">
    <property type="component" value="Chromosome"/>
</dbReference>
<dbReference type="GO" id="GO:0005737">
    <property type="term" value="C:cytoplasm"/>
    <property type="evidence" value="ECO:0007669"/>
    <property type="project" value="UniProtKB-SubCell"/>
</dbReference>
<dbReference type="GO" id="GO:0005840">
    <property type="term" value="C:ribosome"/>
    <property type="evidence" value="ECO:0007669"/>
    <property type="project" value="InterPro"/>
</dbReference>
<dbReference type="GO" id="GO:0043022">
    <property type="term" value="F:ribosome binding"/>
    <property type="evidence" value="ECO:0007669"/>
    <property type="project" value="InterPro"/>
</dbReference>
<dbReference type="GO" id="GO:0042274">
    <property type="term" value="P:ribosomal small subunit biogenesis"/>
    <property type="evidence" value="ECO:0007669"/>
    <property type="project" value="UniProtKB-UniRule"/>
</dbReference>
<dbReference type="GO" id="GO:0006364">
    <property type="term" value="P:rRNA processing"/>
    <property type="evidence" value="ECO:0007669"/>
    <property type="project" value="UniProtKB-UniRule"/>
</dbReference>
<dbReference type="Gene3D" id="2.30.30.240">
    <property type="entry name" value="PRC-barrel domain"/>
    <property type="match status" value="1"/>
</dbReference>
<dbReference type="Gene3D" id="2.40.30.60">
    <property type="entry name" value="RimM"/>
    <property type="match status" value="1"/>
</dbReference>
<dbReference type="HAMAP" id="MF_00014">
    <property type="entry name" value="Ribosome_mat_RimM"/>
    <property type="match status" value="1"/>
</dbReference>
<dbReference type="InterPro" id="IPR011033">
    <property type="entry name" value="PRC_barrel-like_sf"/>
</dbReference>
<dbReference type="InterPro" id="IPR056792">
    <property type="entry name" value="PRC_RimM"/>
</dbReference>
<dbReference type="InterPro" id="IPR011961">
    <property type="entry name" value="RimM"/>
</dbReference>
<dbReference type="InterPro" id="IPR002676">
    <property type="entry name" value="RimM_N"/>
</dbReference>
<dbReference type="InterPro" id="IPR036976">
    <property type="entry name" value="RimM_N_sf"/>
</dbReference>
<dbReference type="InterPro" id="IPR009000">
    <property type="entry name" value="Transl_B-barrel_sf"/>
</dbReference>
<dbReference type="NCBIfam" id="TIGR02273">
    <property type="entry name" value="16S_RimM"/>
    <property type="match status" value="1"/>
</dbReference>
<dbReference type="NCBIfam" id="NF011186">
    <property type="entry name" value="PRK14592.1"/>
    <property type="match status" value="1"/>
</dbReference>
<dbReference type="PANTHER" id="PTHR33692">
    <property type="entry name" value="RIBOSOME MATURATION FACTOR RIMM"/>
    <property type="match status" value="1"/>
</dbReference>
<dbReference type="PANTHER" id="PTHR33692:SF1">
    <property type="entry name" value="RIBOSOME MATURATION FACTOR RIMM"/>
    <property type="match status" value="1"/>
</dbReference>
<dbReference type="Pfam" id="PF24986">
    <property type="entry name" value="PRC_RimM"/>
    <property type="match status" value="1"/>
</dbReference>
<dbReference type="Pfam" id="PF01782">
    <property type="entry name" value="RimM"/>
    <property type="match status" value="1"/>
</dbReference>
<dbReference type="SUPFAM" id="SSF50346">
    <property type="entry name" value="PRC-barrel domain"/>
    <property type="match status" value="1"/>
</dbReference>
<dbReference type="SUPFAM" id="SSF50447">
    <property type="entry name" value="Translation proteins"/>
    <property type="match status" value="1"/>
</dbReference>
<reference key="1">
    <citation type="journal article" date="2006" name="PLoS Genet.">
        <title>Comparative genomics of emerging human ehrlichiosis agents.</title>
        <authorList>
            <person name="Dunning Hotopp J.C."/>
            <person name="Lin M."/>
            <person name="Madupu R."/>
            <person name="Crabtree J."/>
            <person name="Angiuoli S.V."/>
            <person name="Eisen J.A."/>
            <person name="Seshadri R."/>
            <person name="Ren Q."/>
            <person name="Wu M."/>
            <person name="Utterback T.R."/>
            <person name="Smith S."/>
            <person name="Lewis M."/>
            <person name="Khouri H."/>
            <person name="Zhang C."/>
            <person name="Niu H."/>
            <person name="Lin Q."/>
            <person name="Ohashi N."/>
            <person name="Zhi N."/>
            <person name="Nelson W.C."/>
            <person name="Brinkac L.M."/>
            <person name="Dodson R.J."/>
            <person name="Rosovitz M.J."/>
            <person name="Sundaram J.P."/>
            <person name="Daugherty S.C."/>
            <person name="Davidsen T."/>
            <person name="Durkin A.S."/>
            <person name="Gwinn M.L."/>
            <person name="Haft D.H."/>
            <person name="Selengut J.D."/>
            <person name="Sullivan S.A."/>
            <person name="Zafar N."/>
            <person name="Zhou L."/>
            <person name="Benahmed F."/>
            <person name="Forberger H."/>
            <person name="Halpin R."/>
            <person name="Mulligan S."/>
            <person name="Robinson J."/>
            <person name="White O."/>
            <person name="Rikihisa Y."/>
            <person name="Tettelin H."/>
        </authorList>
    </citation>
    <scope>NUCLEOTIDE SEQUENCE [LARGE SCALE GENOMIC DNA]</scope>
    <source>
        <strain>ATCC CRL-10679 / Arkansas</strain>
    </source>
</reference>